<gene>
    <name evidence="1" type="primary">proA</name>
    <name type="ordered locus">UTI89_C0284</name>
</gene>
<sequence length="417" mass="44576">MLEQMGIAAKQASYKLAQLSSREKNRVLEKIADELEAQSESILNANAQDVADARANGLSEAMLDRLALTPARLKGIADDVRQVCNLADPVGQVIDGGVLDSGLRLERRRVPLGVIGVIYEARPNVTVDVASLCLKTGNAVILRGGKETCRTNAATVAVIQDALKSCGLPAGAVQAIDNPDRALVSEMLRMDKYIDMLIPRGGAGLHKLCREQSTIPVITGGIGVCHIYVDESAEIAEALKVIVNAKTQRPSTCNTVETLLVNKNIADSFLPALSKQMAESGVTLHADAAALAQLQAGPAKVVAVKAEEYDDEFLSLDLNVKIVSDLDDAIAHIREHGTQHSDAILTRDMRNAQRFVNEVDSSAVYVNASTRFTDGGQFGLGAEVAVSTQKLHARGPMGLEALTTYKWIGIGDYTIRA</sequence>
<evidence type="ECO:0000255" key="1">
    <source>
        <dbReference type="HAMAP-Rule" id="MF_00412"/>
    </source>
</evidence>
<organism>
    <name type="scientific">Escherichia coli (strain UTI89 / UPEC)</name>
    <dbReference type="NCBI Taxonomy" id="364106"/>
    <lineage>
        <taxon>Bacteria</taxon>
        <taxon>Pseudomonadati</taxon>
        <taxon>Pseudomonadota</taxon>
        <taxon>Gammaproteobacteria</taxon>
        <taxon>Enterobacterales</taxon>
        <taxon>Enterobacteriaceae</taxon>
        <taxon>Escherichia</taxon>
    </lineage>
</organism>
<keyword id="KW-0028">Amino-acid biosynthesis</keyword>
<keyword id="KW-0963">Cytoplasm</keyword>
<keyword id="KW-0521">NADP</keyword>
<keyword id="KW-0560">Oxidoreductase</keyword>
<keyword id="KW-0641">Proline biosynthesis</keyword>
<accession>Q1RFS7</accession>
<comment type="function">
    <text evidence="1">Catalyzes the NADPH-dependent reduction of L-glutamate 5-phosphate into L-glutamate 5-semialdehyde and phosphate. The product spontaneously undergoes cyclization to form 1-pyrroline-5-carboxylate.</text>
</comment>
<comment type="catalytic activity">
    <reaction evidence="1">
        <text>L-glutamate 5-semialdehyde + phosphate + NADP(+) = L-glutamyl 5-phosphate + NADPH + H(+)</text>
        <dbReference type="Rhea" id="RHEA:19541"/>
        <dbReference type="ChEBI" id="CHEBI:15378"/>
        <dbReference type="ChEBI" id="CHEBI:43474"/>
        <dbReference type="ChEBI" id="CHEBI:57783"/>
        <dbReference type="ChEBI" id="CHEBI:58066"/>
        <dbReference type="ChEBI" id="CHEBI:58274"/>
        <dbReference type="ChEBI" id="CHEBI:58349"/>
        <dbReference type="EC" id="1.2.1.41"/>
    </reaction>
</comment>
<comment type="pathway">
    <text evidence="1">Amino-acid biosynthesis; L-proline biosynthesis; L-glutamate 5-semialdehyde from L-glutamate: step 2/2.</text>
</comment>
<comment type="subcellular location">
    <subcellularLocation>
        <location evidence="1">Cytoplasm</location>
    </subcellularLocation>
</comment>
<comment type="similarity">
    <text evidence="1">Belongs to the gamma-glutamyl phosphate reductase family.</text>
</comment>
<name>PROA_ECOUT</name>
<reference key="1">
    <citation type="journal article" date="2006" name="Proc. Natl. Acad. Sci. U.S.A.">
        <title>Identification of genes subject to positive selection in uropathogenic strains of Escherichia coli: a comparative genomics approach.</title>
        <authorList>
            <person name="Chen S.L."/>
            <person name="Hung C.-S."/>
            <person name="Xu J."/>
            <person name="Reigstad C.S."/>
            <person name="Magrini V."/>
            <person name="Sabo A."/>
            <person name="Blasiar D."/>
            <person name="Bieri T."/>
            <person name="Meyer R.R."/>
            <person name="Ozersky P."/>
            <person name="Armstrong J.R."/>
            <person name="Fulton R.S."/>
            <person name="Latreille J.P."/>
            <person name="Spieth J."/>
            <person name="Hooton T.M."/>
            <person name="Mardis E.R."/>
            <person name="Hultgren S.J."/>
            <person name="Gordon J.I."/>
        </authorList>
    </citation>
    <scope>NUCLEOTIDE SEQUENCE [LARGE SCALE GENOMIC DNA]</scope>
    <source>
        <strain>UTI89 / UPEC</strain>
    </source>
</reference>
<dbReference type="EC" id="1.2.1.41" evidence="1"/>
<dbReference type="EMBL" id="CP000243">
    <property type="protein sequence ID" value="ABE05787.1"/>
    <property type="molecule type" value="Genomic_DNA"/>
</dbReference>
<dbReference type="RefSeq" id="WP_000893305.1">
    <property type="nucleotide sequence ID" value="NZ_CP064825.1"/>
</dbReference>
<dbReference type="SMR" id="Q1RFS7"/>
<dbReference type="KEGG" id="eci:UTI89_C0284"/>
<dbReference type="HOGENOM" id="CLU_030231_0_0_6"/>
<dbReference type="UniPathway" id="UPA00098">
    <property type="reaction ID" value="UER00360"/>
</dbReference>
<dbReference type="Proteomes" id="UP000001952">
    <property type="component" value="Chromosome"/>
</dbReference>
<dbReference type="GO" id="GO:0005737">
    <property type="term" value="C:cytoplasm"/>
    <property type="evidence" value="ECO:0007669"/>
    <property type="project" value="UniProtKB-SubCell"/>
</dbReference>
<dbReference type="GO" id="GO:0004350">
    <property type="term" value="F:glutamate-5-semialdehyde dehydrogenase activity"/>
    <property type="evidence" value="ECO:0007669"/>
    <property type="project" value="UniProtKB-UniRule"/>
</dbReference>
<dbReference type="GO" id="GO:0050661">
    <property type="term" value="F:NADP binding"/>
    <property type="evidence" value="ECO:0007669"/>
    <property type="project" value="InterPro"/>
</dbReference>
<dbReference type="GO" id="GO:0055129">
    <property type="term" value="P:L-proline biosynthetic process"/>
    <property type="evidence" value="ECO:0007669"/>
    <property type="project" value="UniProtKB-UniRule"/>
</dbReference>
<dbReference type="CDD" id="cd07079">
    <property type="entry name" value="ALDH_F18-19_ProA-GPR"/>
    <property type="match status" value="1"/>
</dbReference>
<dbReference type="FunFam" id="3.40.309.10:FF:000006">
    <property type="entry name" value="Gamma-glutamyl phosphate reductase"/>
    <property type="match status" value="1"/>
</dbReference>
<dbReference type="Gene3D" id="3.40.605.10">
    <property type="entry name" value="Aldehyde Dehydrogenase, Chain A, domain 1"/>
    <property type="match status" value="1"/>
</dbReference>
<dbReference type="Gene3D" id="3.40.309.10">
    <property type="entry name" value="Aldehyde Dehydrogenase, Chain A, domain 2"/>
    <property type="match status" value="1"/>
</dbReference>
<dbReference type="HAMAP" id="MF_00412">
    <property type="entry name" value="ProA"/>
    <property type="match status" value="1"/>
</dbReference>
<dbReference type="InterPro" id="IPR016161">
    <property type="entry name" value="Ald_DH/histidinol_DH"/>
</dbReference>
<dbReference type="InterPro" id="IPR016163">
    <property type="entry name" value="Ald_DH_C"/>
</dbReference>
<dbReference type="InterPro" id="IPR016162">
    <property type="entry name" value="Ald_DH_N"/>
</dbReference>
<dbReference type="InterPro" id="IPR015590">
    <property type="entry name" value="Aldehyde_DH_dom"/>
</dbReference>
<dbReference type="InterPro" id="IPR020593">
    <property type="entry name" value="G-glutamylP_reductase_CS"/>
</dbReference>
<dbReference type="InterPro" id="IPR012134">
    <property type="entry name" value="Glu-5-SA_DH"/>
</dbReference>
<dbReference type="InterPro" id="IPR000965">
    <property type="entry name" value="GPR_dom"/>
</dbReference>
<dbReference type="NCBIfam" id="NF001221">
    <property type="entry name" value="PRK00197.1"/>
    <property type="match status" value="1"/>
</dbReference>
<dbReference type="NCBIfam" id="TIGR00407">
    <property type="entry name" value="proA"/>
    <property type="match status" value="1"/>
</dbReference>
<dbReference type="PANTHER" id="PTHR11063:SF8">
    <property type="entry name" value="DELTA-1-PYRROLINE-5-CARBOXYLATE SYNTHASE"/>
    <property type="match status" value="1"/>
</dbReference>
<dbReference type="PANTHER" id="PTHR11063">
    <property type="entry name" value="GLUTAMATE SEMIALDEHYDE DEHYDROGENASE"/>
    <property type="match status" value="1"/>
</dbReference>
<dbReference type="Pfam" id="PF00171">
    <property type="entry name" value="Aldedh"/>
    <property type="match status" value="1"/>
</dbReference>
<dbReference type="PIRSF" id="PIRSF000151">
    <property type="entry name" value="GPR"/>
    <property type="match status" value="1"/>
</dbReference>
<dbReference type="SUPFAM" id="SSF53720">
    <property type="entry name" value="ALDH-like"/>
    <property type="match status" value="1"/>
</dbReference>
<dbReference type="PROSITE" id="PS01223">
    <property type="entry name" value="PROA"/>
    <property type="match status" value="1"/>
</dbReference>
<feature type="chain" id="PRO_0000252571" description="Gamma-glutamyl phosphate reductase">
    <location>
        <begin position="1"/>
        <end position="417"/>
    </location>
</feature>
<proteinExistence type="inferred from homology"/>
<protein>
    <recommendedName>
        <fullName evidence="1">Gamma-glutamyl phosphate reductase</fullName>
        <shortName evidence="1">GPR</shortName>
        <ecNumber evidence="1">1.2.1.41</ecNumber>
    </recommendedName>
    <alternativeName>
        <fullName evidence="1">Glutamate-5-semialdehyde dehydrogenase</fullName>
    </alternativeName>
    <alternativeName>
        <fullName evidence="1">Glutamyl-gamma-semialdehyde dehydrogenase</fullName>
        <shortName evidence="1">GSA dehydrogenase</shortName>
    </alternativeName>
</protein>